<gene>
    <name type="primary">YOS1</name>
    <name type="ORF">FGRRES_04451</name>
    <name type="ORF">FGSG_04451</name>
</gene>
<name>OS9_GIBZE</name>
<protein>
    <recommendedName>
        <fullName>Protein OS-9 homolog</fullName>
    </recommendedName>
</protein>
<dbReference type="EMBL" id="DS231664">
    <property type="protein sequence ID" value="ESU08650.1"/>
    <property type="molecule type" value="Genomic_DNA"/>
</dbReference>
<dbReference type="EMBL" id="HG970333">
    <property type="protein sequence ID" value="CEF79464.1"/>
    <property type="molecule type" value="Genomic_DNA"/>
</dbReference>
<dbReference type="RefSeq" id="XP_011321149.1">
    <property type="nucleotide sequence ID" value="XM_011322847.1"/>
</dbReference>
<dbReference type="STRING" id="229533.Q4IEA7"/>
<dbReference type="GlyCosmos" id="Q4IEA7">
    <property type="glycosylation" value="1 site, No reported glycans"/>
</dbReference>
<dbReference type="GeneID" id="23551702"/>
<dbReference type="KEGG" id="fgr:FGSG_04451"/>
<dbReference type="VEuPathDB" id="FungiDB:FGRAMPH1_01G15325"/>
<dbReference type="eggNOG" id="KOG3394">
    <property type="taxonomic scope" value="Eukaryota"/>
</dbReference>
<dbReference type="HOGENOM" id="CLU_025069_0_0_1"/>
<dbReference type="InParanoid" id="Q4IEA7"/>
<dbReference type="OrthoDB" id="95990at110618"/>
<dbReference type="Proteomes" id="UP000070720">
    <property type="component" value="Chromosome 2"/>
</dbReference>
<dbReference type="GO" id="GO:0005788">
    <property type="term" value="C:endoplasmic reticulum lumen"/>
    <property type="evidence" value="ECO:0007669"/>
    <property type="project" value="TreeGrafter"/>
</dbReference>
<dbReference type="GO" id="GO:0005789">
    <property type="term" value="C:endoplasmic reticulum membrane"/>
    <property type="evidence" value="ECO:0007669"/>
    <property type="project" value="UniProtKB-SubCell"/>
</dbReference>
<dbReference type="GO" id="GO:0030246">
    <property type="term" value="F:carbohydrate binding"/>
    <property type="evidence" value="ECO:0007669"/>
    <property type="project" value="UniProtKB-KW"/>
</dbReference>
<dbReference type="GO" id="GO:0030968">
    <property type="term" value="P:endoplasmic reticulum unfolded protein response"/>
    <property type="evidence" value="ECO:0007669"/>
    <property type="project" value="InterPro"/>
</dbReference>
<dbReference type="GO" id="GO:0030970">
    <property type="term" value="P:retrograde protein transport, ER to cytosol"/>
    <property type="evidence" value="ECO:0007669"/>
    <property type="project" value="TreeGrafter"/>
</dbReference>
<dbReference type="Gene3D" id="2.70.130.10">
    <property type="entry name" value="Mannose-6-phosphate receptor binding domain"/>
    <property type="match status" value="1"/>
</dbReference>
<dbReference type="InterPro" id="IPR009011">
    <property type="entry name" value="Man6P_isomerase_rcpt-bd_dom_sf"/>
</dbReference>
<dbReference type="InterPro" id="IPR044865">
    <property type="entry name" value="MRH_dom"/>
</dbReference>
<dbReference type="InterPro" id="IPR045149">
    <property type="entry name" value="OS-9-like"/>
</dbReference>
<dbReference type="InterPro" id="IPR012913">
    <property type="entry name" value="OS9-like_dom"/>
</dbReference>
<dbReference type="PANTHER" id="PTHR15414:SF0">
    <property type="entry name" value="ENDOPLASMIC RETICULUM LECTIN 1"/>
    <property type="match status" value="1"/>
</dbReference>
<dbReference type="PANTHER" id="PTHR15414">
    <property type="entry name" value="OS-9-RELATED"/>
    <property type="match status" value="1"/>
</dbReference>
<dbReference type="Pfam" id="PF07915">
    <property type="entry name" value="PRKCSH"/>
    <property type="match status" value="1"/>
</dbReference>
<dbReference type="PROSITE" id="PS00014">
    <property type="entry name" value="ER_TARGET"/>
    <property type="match status" value="1"/>
</dbReference>
<dbReference type="PROSITE" id="PS51914">
    <property type="entry name" value="MRH"/>
    <property type="match status" value="1"/>
</dbReference>
<accession>Q4IEA7</accession>
<accession>A0A098DKG9</accession>
<accession>A0A0E0S7I9</accession>
<accession>V6R9V7</accession>
<feature type="signal peptide" evidence="3">
    <location>
        <begin position="1"/>
        <end position="17"/>
    </location>
</feature>
<feature type="chain" id="PRO_0000043271" description="Protein OS-9 homolog">
    <location>
        <begin position="18"/>
        <end position="512"/>
    </location>
</feature>
<feature type="domain" description="MRH" evidence="4">
    <location>
        <begin position="149"/>
        <end position="288"/>
    </location>
</feature>
<feature type="region of interest" description="Disordered" evidence="6">
    <location>
        <begin position="71"/>
        <end position="91"/>
    </location>
</feature>
<feature type="region of interest" description="Disordered" evidence="6">
    <location>
        <begin position="329"/>
        <end position="349"/>
    </location>
</feature>
<feature type="region of interest" description="Disordered" evidence="6">
    <location>
        <begin position="485"/>
        <end position="512"/>
    </location>
</feature>
<feature type="short sequence motif" description="Prevents secretion from ER" evidence="5">
    <location>
        <begin position="509"/>
        <end position="512"/>
    </location>
</feature>
<feature type="compositionally biased region" description="Basic and acidic residues" evidence="6">
    <location>
        <begin position="73"/>
        <end position="88"/>
    </location>
</feature>
<feature type="compositionally biased region" description="Acidic residues" evidence="6">
    <location>
        <begin position="492"/>
        <end position="504"/>
    </location>
</feature>
<feature type="binding site" evidence="2">
    <location>
        <position position="158"/>
    </location>
    <ligand>
        <name>a mannooligosaccharide derivative</name>
        <dbReference type="ChEBI" id="CHEBI:71274"/>
    </ligand>
</feature>
<feature type="binding site" evidence="2">
    <location>
        <position position="159"/>
    </location>
    <ligand>
        <name>a mannooligosaccharide derivative</name>
        <dbReference type="ChEBI" id="CHEBI:71274"/>
    </ligand>
</feature>
<feature type="binding site" evidence="2">
    <location>
        <position position="171"/>
    </location>
    <ligand>
        <name>a mannooligosaccharide derivative</name>
        <dbReference type="ChEBI" id="CHEBI:71274"/>
    </ligand>
</feature>
<feature type="binding site" evidence="2">
    <location>
        <position position="242"/>
    </location>
    <ligand>
        <name>a mannooligosaccharide derivative</name>
        <dbReference type="ChEBI" id="CHEBI:71274"/>
    </ligand>
</feature>
<feature type="binding site" evidence="2">
    <location>
        <position position="248"/>
    </location>
    <ligand>
        <name>a mannooligosaccharide derivative</name>
        <dbReference type="ChEBI" id="CHEBI:71274"/>
    </ligand>
</feature>
<feature type="binding site" evidence="2">
    <location>
        <position position="270"/>
    </location>
    <ligand>
        <name>a mannooligosaccharide derivative</name>
        <dbReference type="ChEBI" id="CHEBI:71274"/>
    </ligand>
</feature>
<feature type="binding site" evidence="2">
    <location>
        <position position="276"/>
    </location>
    <ligand>
        <name>a mannooligosaccharide derivative</name>
        <dbReference type="ChEBI" id="CHEBI:71274"/>
    </ligand>
</feature>
<feature type="glycosylation site" description="N-linked (GlcNAc...) asparagine" evidence="3">
    <location>
        <position position="118"/>
    </location>
</feature>
<feature type="disulfide bond" evidence="4">
    <location>
        <begin position="151"/>
        <end position="164"/>
    </location>
</feature>
<feature type="disulfide bond" evidence="4">
    <location>
        <begin position="241"/>
        <end position="274"/>
    </location>
</feature>
<feature type="disulfide bond" evidence="4">
    <location>
        <begin position="256"/>
        <end position="286"/>
    </location>
</feature>
<comment type="function">
    <text evidence="1">Lectin involved in the quality control of the secretory pathway. As a member of the endoplasmic reticulum-associated degradation lumenal (ERAD-L) surveillance system, targets misfolded endoplasmic reticulum lumenal glycoproteins for degradation (By similarity).</text>
</comment>
<comment type="subunit">
    <text evidence="1">Interacts with missfolded ER lumenal proteins.</text>
</comment>
<comment type="subcellular location">
    <subcellularLocation>
        <location evidence="5">Endoplasmic reticulum membrane</location>
        <topology evidence="1">Peripheral membrane protein</topology>
        <orientation evidence="1">Lumenal side</orientation>
    </subcellularLocation>
</comment>
<comment type="similarity">
    <text evidence="7">Belongs to the OS-9 family.</text>
</comment>
<keyword id="KW-1015">Disulfide bond</keyword>
<keyword id="KW-0256">Endoplasmic reticulum</keyword>
<keyword id="KW-0325">Glycoprotein</keyword>
<keyword id="KW-0430">Lectin</keyword>
<keyword id="KW-0472">Membrane</keyword>
<keyword id="KW-1185">Reference proteome</keyword>
<keyword id="KW-0732">Signal</keyword>
<evidence type="ECO:0000250" key="1"/>
<evidence type="ECO:0000250" key="2">
    <source>
        <dbReference type="UniProtKB" id="Q13438"/>
    </source>
</evidence>
<evidence type="ECO:0000255" key="3"/>
<evidence type="ECO:0000255" key="4">
    <source>
        <dbReference type="PROSITE-ProRule" id="PRU01262"/>
    </source>
</evidence>
<evidence type="ECO:0000255" key="5">
    <source>
        <dbReference type="PROSITE-ProRule" id="PRU10138"/>
    </source>
</evidence>
<evidence type="ECO:0000256" key="6">
    <source>
        <dbReference type="SAM" id="MobiDB-lite"/>
    </source>
</evidence>
<evidence type="ECO:0000305" key="7"/>
<sequence length="512" mass="56835">MRRFNLILLASLQLVGARSPGGFNIHEDLLTYPQFEVVFDNQYISEKDAHSLLDSQHPTYSADFAQSTLGQAREADARDNEAENKDQDGPSYKYELMKMPPNEYLCSIPILQSPEAENKTANELAKAEEARELTRATASGWELLSELQDSCLYFMSGWWSYSFCNNREIVQFHALPSIPNGQPPKRDPHTMEFTLGRVPAVPASAAHQAKMNGQEAPPPAELQVKGDQRYLVQRLEGGTICDLTGRERTIEVQYHCVPGMKADRIGWIKEVTICAYLMVVNTPRLCNDVAFLPPEETRANPITCKLILDKLNEPPSLDQTVPLAQDEAQVPLKQEDTGAKSGDAAPRDVGKEPINIGGVLVGARNVLSGADEAGKPPAKLPPPRSYFSNSNTDTERFLKVVASGKSKEDGGEMEVLGNEELEKLDLKPSVVKDMTERMRKLAGKYGWKLELVELPGGEKELRGYIDADEEELAKNKAKLKKEKEAAAKAKGDDEEEVVEGSEEQFFDKKDEL</sequence>
<organism>
    <name type="scientific">Gibberella zeae (strain ATCC MYA-4620 / CBS 123657 / FGSC 9075 / NRRL 31084 / PH-1)</name>
    <name type="common">Wheat head blight fungus</name>
    <name type="synonym">Fusarium graminearum</name>
    <dbReference type="NCBI Taxonomy" id="229533"/>
    <lineage>
        <taxon>Eukaryota</taxon>
        <taxon>Fungi</taxon>
        <taxon>Dikarya</taxon>
        <taxon>Ascomycota</taxon>
        <taxon>Pezizomycotina</taxon>
        <taxon>Sordariomycetes</taxon>
        <taxon>Hypocreomycetidae</taxon>
        <taxon>Hypocreales</taxon>
        <taxon>Nectriaceae</taxon>
        <taxon>Fusarium</taxon>
    </lineage>
</organism>
<reference key="1">
    <citation type="journal article" date="2007" name="Science">
        <title>The Fusarium graminearum genome reveals a link between localized polymorphism and pathogen specialization.</title>
        <authorList>
            <person name="Cuomo C.A."/>
            <person name="Gueldener U."/>
            <person name="Xu J.-R."/>
            <person name="Trail F."/>
            <person name="Turgeon B.G."/>
            <person name="Di Pietro A."/>
            <person name="Walton J.D."/>
            <person name="Ma L.-J."/>
            <person name="Baker S.E."/>
            <person name="Rep M."/>
            <person name="Adam G."/>
            <person name="Antoniw J."/>
            <person name="Baldwin T."/>
            <person name="Calvo S.E."/>
            <person name="Chang Y.-L."/>
            <person name="DeCaprio D."/>
            <person name="Gale L.R."/>
            <person name="Gnerre S."/>
            <person name="Goswami R.S."/>
            <person name="Hammond-Kosack K."/>
            <person name="Harris L.J."/>
            <person name="Hilburn K."/>
            <person name="Kennell J.C."/>
            <person name="Kroken S."/>
            <person name="Magnuson J.K."/>
            <person name="Mannhaupt G."/>
            <person name="Mauceli E.W."/>
            <person name="Mewes H.-W."/>
            <person name="Mitterbauer R."/>
            <person name="Muehlbauer G."/>
            <person name="Muensterkoetter M."/>
            <person name="Nelson D."/>
            <person name="O'Donnell K."/>
            <person name="Ouellet T."/>
            <person name="Qi W."/>
            <person name="Quesneville H."/>
            <person name="Roncero M.I.G."/>
            <person name="Seong K.-Y."/>
            <person name="Tetko I.V."/>
            <person name="Urban M."/>
            <person name="Waalwijk C."/>
            <person name="Ward T.J."/>
            <person name="Yao J."/>
            <person name="Birren B.W."/>
            <person name="Kistler H.C."/>
        </authorList>
    </citation>
    <scope>NUCLEOTIDE SEQUENCE [LARGE SCALE GENOMIC DNA]</scope>
    <source>
        <strain>ATCC MYA-4620 / CBS 123657 / FGSC 9075 / NRRL 31084 / PH-1</strain>
    </source>
</reference>
<reference key="2">
    <citation type="journal article" date="2010" name="Nature">
        <title>Comparative genomics reveals mobile pathogenicity chromosomes in Fusarium.</title>
        <authorList>
            <person name="Ma L.-J."/>
            <person name="van der Does H.C."/>
            <person name="Borkovich K.A."/>
            <person name="Coleman J.J."/>
            <person name="Daboussi M.-J."/>
            <person name="Di Pietro A."/>
            <person name="Dufresne M."/>
            <person name="Freitag M."/>
            <person name="Grabherr M."/>
            <person name="Henrissat B."/>
            <person name="Houterman P.M."/>
            <person name="Kang S."/>
            <person name="Shim W.-B."/>
            <person name="Woloshuk C."/>
            <person name="Xie X."/>
            <person name="Xu J.-R."/>
            <person name="Antoniw J."/>
            <person name="Baker S.E."/>
            <person name="Bluhm B.H."/>
            <person name="Breakspear A."/>
            <person name="Brown D.W."/>
            <person name="Butchko R.A.E."/>
            <person name="Chapman S."/>
            <person name="Coulson R."/>
            <person name="Coutinho P.M."/>
            <person name="Danchin E.G.J."/>
            <person name="Diener A."/>
            <person name="Gale L.R."/>
            <person name="Gardiner D.M."/>
            <person name="Goff S."/>
            <person name="Hammond-Kosack K.E."/>
            <person name="Hilburn K."/>
            <person name="Hua-Van A."/>
            <person name="Jonkers W."/>
            <person name="Kazan K."/>
            <person name="Kodira C.D."/>
            <person name="Koehrsen M."/>
            <person name="Kumar L."/>
            <person name="Lee Y.-H."/>
            <person name="Li L."/>
            <person name="Manners J.M."/>
            <person name="Miranda-Saavedra D."/>
            <person name="Mukherjee M."/>
            <person name="Park G."/>
            <person name="Park J."/>
            <person name="Park S.-Y."/>
            <person name="Proctor R.H."/>
            <person name="Regev A."/>
            <person name="Ruiz-Roldan M.C."/>
            <person name="Sain D."/>
            <person name="Sakthikumar S."/>
            <person name="Sykes S."/>
            <person name="Schwartz D.C."/>
            <person name="Turgeon B.G."/>
            <person name="Wapinski I."/>
            <person name="Yoder O."/>
            <person name="Young S."/>
            <person name="Zeng Q."/>
            <person name="Zhou S."/>
            <person name="Galagan J."/>
            <person name="Cuomo C.A."/>
            <person name="Kistler H.C."/>
            <person name="Rep M."/>
        </authorList>
    </citation>
    <scope>GENOME REANNOTATION</scope>
    <source>
        <strain>ATCC MYA-4620 / CBS 123657 / FGSC 9075 / NRRL 31084 / PH-1</strain>
    </source>
</reference>
<reference key="3">
    <citation type="journal article" date="2015" name="BMC Genomics">
        <title>The completed genome sequence of the pathogenic ascomycete fungus Fusarium graminearum.</title>
        <authorList>
            <person name="King R."/>
            <person name="Urban M."/>
            <person name="Hammond-Kosack M.C.U."/>
            <person name="Hassani-Pak K."/>
            <person name="Hammond-Kosack K.E."/>
        </authorList>
    </citation>
    <scope>NUCLEOTIDE SEQUENCE [LARGE SCALE GENOMIC DNA]</scope>
    <source>
        <strain>ATCC MYA-4620 / CBS 123657 / FGSC 9075 / NRRL 31084 / PH-1</strain>
    </source>
</reference>
<proteinExistence type="inferred from homology"/>